<reference key="1">
    <citation type="journal article" date="2008" name="BMC Genomics">
        <title>Chloroplast genome sequencing analysis of Heterosigma akashiwo CCMP452 (West Atlantic) and NIES293 (West Pacific) strains.</title>
        <authorList>
            <person name="Cattolico R.A."/>
            <person name="Jacobs M.A."/>
            <person name="Zhou Y."/>
            <person name="Chang J."/>
            <person name="Duplessis M."/>
            <person name="Lybrand T."/>
            <person name="McKay J."/>
            <person name="Ong H.C."/>
            <person name="Sims E."/>
            <person name="Rocap G."/>
        </authorList>
    </citation>
    <scope>NUCLEOTIDE SEQUENCE [LARGE SCALE GENOMIC DNA]</scope>
</reference>
<proteinExistence type="inferred from homology"/>
<accession>B2XTP5</accession>
<name>ATPD_HETA4</name>
<keyword id="KW-0066">ATP synthesis</keyword>
<keyword id="KW-0139">CF(1)</keyword>
<keyword id="KW-0150">Chloroplast</keyword>
<keyword id="KW-0375">Hydrogen ion transport</keyword>
<keyword id="KW-0406">Ion transport</keyword>
<keyword id="KW-0472">Membrane</keyword>
<keyword id="KW-0934">Plastid</keyword>
<keyword id="KW-0793">Thylakoid</keyword>
<keyword id="KW-0813">Transport</keyword>
<dbReference type="EMBL" id="EU168191">
    <property type="protein sequence ID" value="ABV70128.1"/>
    <property type="molecule type" value="Genomic_DNA"/>
</dbReference>
<dbReference type="RefSeq" id="YP_001936381.1">
    <property type="nucleotide sequence ID" value="NC_010772.1"/>
</dbReference>
<dbReference type="SMR" id="B2XTP5"/>
<dbReference type="GeneID" id="6335679"/>
<dbReference type="GO" id="GO:0009535">
    <property type="term" value="C:chloroplast thylakoid membrane"/>
    <property type="evidence" value="ECO:0007669"/>
    <property type="project" value="UniProtKB-SubCell"/>
</dbReference>
<dbReference type="GO" id="GO:0045259">
    <property type="term" value="C:proton-transporting ATP synthase complex"/>
    <property type="evidence" value="ECO:0007669"/>
    <property type="project" value="UniProtKB-KW"/>
</dbReference>
<dbReference type="GO" id="GO:0046933">
    <property type="term" value="F:proton-transporting ATP synthase activity, rotational mechanism"/>
    <property type="evidence" value="ECO:0007669"/>
    <property type="project" value="UniProtKB-UniRule"/>
</dbReference>
<dbReference type="Gene3D" id="1.10.520.20">
    <property type="entry name" value="N-terminal domain of the delta subunit of the F1F0-ATP synthase"/>
    <property type="match status" value="1"/>
</dbReference>
<dbReference type="HAMAP" id="MF_01416">
    <property type="entry name" value="ATP_synth_delta_bact"/>
    <property type="match status" value="1"/>
</dbReference>
<dbReference type="InterPro" id="IPR026015">
    <property type="entry name" value="ATP_synth_OSCP/delta_N_sf"/>
</dbReference>
<dbReference type="InterPro" id="IPR000711">
    <property type="entry name" value="ATPase_OSCP/dsu"/>
</dbReference>
<dbReference type="PANTHER" id="PTHR11910">
    <property type="entry name" value="ATP SYNTHASE DELTA CHAIN"/>
    <property type="match status" value="1"/>
</dbReference>
<dbReference type="Pfam" id="PF00213">
    <property type="entry name" value="OSCP"/>
    <property type="match status" value="1"/>
</dbReference>
<dbReference type="SUPFAM" id="SSF47928">
    <property type="entry name" value="N-terminal domain of the delta subunit of the F1F0-ATP synthase"/>
    <property type="match status" value="1"/>
</dbReference>
<sequence length="203" mass="23059">MSTNSRAGDAYAYALLKVLFNETKDFDSFSDLVGDVLDFVTIFNTCPSIEEFFANPTYSPIQKKQFLYDFFGRSLNPILMSFLYLLCDTKRIIYISSIISIFLETLLKNTNSHIVEVQTPTGKDYKLDISKLETTLSGWFNKIQKNNDEAVNFLNFDESLVIFTVKEVPGLLGGFRLNFVTDSKVIDFSIAGKIKRLAAVLNY</sequence>
<comment type="function">
    <text evidence="1">F(1)F(0) ATP synthase produces ATP from ADP in the presence of a proton or sodium gradient. F-type ATPases consist of two structural domains, F(1) containing the extramembraneous catalytic core and F(0) containing the membrane proton channel, linked together by a central stalk and a peripheral stalk. During catalysis, ATP synthesis in the catalytic domain of F(1) is coupled via a rotary mechanism of the central stalk subunits to proton translocation.</text>
</comment>
<comment type="function">
    <text evidence="1">This protein is part of the stalk that links CF(0) to CF(1). It either transmits conformational changes from CF(0) to CF(1) or is implicated in proton conduction.</text>
</comment>
<comment type="subunit">
    <text evidence="1">F-type ATPases have 2 components, F(1) - the catalytic core - and F(0) - the membrane proton channel. F(1) has five subunits: alpha(3), beta(3), gamma(1), delta(1), epsilon(1). CF(0) has four main subunits: a(1), b(1), b'(1) and c(10-14). The alpha and beta chains form an alternating ring which encloses part of the gamma chain. F(1) is attached to F(0) by a central stalk formed by the gamma and epsilon chains, while a peripheral stalk is formed by the delta, b and b' chains.</text>
</comment>
<comment type="subcellular location">
    <subcellularLocation>
        <location evidence="1">Plastid</location>
        <location evidence="1">Chloroplast thylakoid membrane</location>
        <topology evidence="1">Peripheral membrane protein</topology>
    </subcellularLocation>
</comment>
<comment type="similarity">
    <text evidence="1">Belongs to the ATPase delta chain family.</text>
</comment>
<feature type="chain" id="PRO_0000371214" description="ATP synthase subunit delta, chloroplastic">
    <location>
        <begin position="1"/>
        <end position="203"/>
    </location>
</feature>
<geneLocation type="chloroplast"/>
<evidence type="ECO:0000255" key="1">
    <source>
        <dbReference type="HAMAP-Rule" id="MF_01416"/>
    </source>
</evidence>
<organism>
    <name type="scientific">Heterosigma akashiwo (strain CCMP452 / OLISTH)</name>
    <dbReference type="NCBI Taxonomy" id="536046"/>
    <lineage>
        <taxon>Eukaryota</taxon>
        <taxon>Sar</taxon>
        <taxon>Stramenopiles</taxon>
        <taxon>Ochrophyta</taxon>
        <taxon>Raphidophyceae</taxon>
        <taxon>Chattonellales</taxon>
        <taxon>Chattonellaceae</taxon>
        <taxon>Heterosigma</taxon>
    </lineage>
</organism>
<gene>
    <name evidence="1" type="primary">atpD</name>
    <name type="ordered locus">Heak452_Cp080</name>
</gene>
<protein>
    <recommendedName>
        <fullName evidence="1">ATP synthase subunit delta, chloroplastic</fullName>
    </recommendedName>
    <alternativeName>
        <fullName evidence="1">ATP synthase F(1) sector subunit delta</fullName>
    </alternativeName>
    <alternativeName>
        <fullName evidence="1">F-type ATPase subunit delta</fullName>
    </alternativeName>
</protein>